<evidence type="ECO:0000255" key="1">
    <source>
        <dbReference type="HAMAP-Rule" id="MF_01307"/>
    </source>
</evidence>
<evidence type="ECO:0000305" key="2"/>
<keyword id="KW-0687">Ribonucleoprotein</keyword>
<keyword id="KW-0689">Ribosomal protein</keyword>
<keyword id="KW-0694">RNA-binding</keyword>
<keyword id="KW-0699">rRNA-binding</keyword>
<protein>
    <recommendedName>
        <fullName evidence="1">Small ribosomal subunit protein uS5</fullName>
    </recommendedName>
    <alternativeName>
        <fullName evidence="2">30S ribosomal protein S5</fullName>
    </alternativeName>
</protein>
<dbReference type="EMBL" id="CP001638">
    <property type="protein sequence ID" value="ACS23068.1"/>
    <property type="molecule type" value="Genomic_DNA"/>
</dbReference>
<dbReference type="SMR" id="C5D3T4"/>
<dbReference type="STRING" id="471223.GWCH70_0128"/>
<dbReference type="KEGG" id="gwc:GWCH70_0128"/>
<dbReference type="eggNOG" id="COG0098">
    <property type="taxonomic scope" value="Bacteria"/>
</dbReference>
<dbReference type="HOGENOM" id="CLU_065898_2_2_9"/>
<dbReference type="OrthoDB" id="9809045at2"/>
<dbReference type="GO" id="GO:0015935">
    <property type="term" value="C:small ribosomal subunit"/>
    <property type="evidence" value="ECO:0007669"/>
    <property type="project" value="InterPro"/>
</dbReference>
<dbReference type="GO" id="GO:0019843">
    <property type="term" value="F:rRNA binding"/>
    <property type="evidence" value="ECO:0007669"/>
    <property type="project" value="UniProtKB-UniRule"/>
</dbReference>
<dbReference type="GO" id="GO:0003735">
    <property type="term" value="F:structural constituent of ribosome"/>
    <property type="evidence" value="ECO:0007669"/>
    <property type="project" value="InterPro"/>
</dbReference>
<dbReference type="GO" id="GO:0006412">
    <property type="term" value="P:translation"/>
    <property type="evidence" value="ECO:0007669"/>
    <property type="project" value="UniProtKB-UniRule"/>
</dbReference>
<dbReference type="FunFam" id="3.30.160.20:FF:000001">
    <property type="entry name" value="30S ribosomal protein S5"/>
    <property type="match status" value="1"/>
</dbReference>
<dbReference type="FunFam" id="3.30.230.10:FF:000002">
    <property type="entry name" value="30S ribosomal protein S5"/>
    <property type="match status" value="1"/>
</dbReference>
<dbReference type="Gene3D" id="3.30.160.20">
    <property type="match status" value="1"/>
</dbReference>
<dbReference type="Gene3D" id="3.30.230.10">
    <property type="match status" value="1"/>
</dbReference>
<dbReference type="HAMAP" id="MF_01307_B">
    <property type="entry name" value="Ribosomal_uS5_B"/>
    <property type="match status" value="1"/>
</dbReference>
<dbReference type="InterPro" id="IPR020568">
    <property type="entry name" value="Ribosomal_Su5_D2-typ_SF"/>
</dbReference>
<dbReference type="InterPro" id="IPR000851">
    <property type="entry name" value="Ribosomal_uS5"/>
</dbReference>
<dbReference type="InterPro" id="IPR005712">
    <property type="entry name" value="Ribosomal_uS5_bac-type"/>
</dbReference>
<dbReference type="InterPro" id="IPR005324">
    <property type="entry name" value="Ribosomal_uS5_C"/>
</dbReference>
<dbReference type="InterPro" id="IPR013810">
    <property type="entry name" value="Ribosomal_uS5_N"/>
</dbReference>
<dbReference type="InterPro" id="IPR018192">
    <property type="entry name" value="Ribosomal_uS5_N_CS"/>
</dbReference>
<dbReference type="InterPro" id="IPR014721">
    <property type="entry name" value="Ribsml_uS5_D2-typ_fold_subgr"/>
</dbReference>
<dbReference type="NCBIfam" id="TIGR01021">
    <property type="entry name" value="rpsE_bact"/>
    <property type="match status" value="1"/>
</dbReference>
<dbReference type="PANTHER" id="PTHR48277">
    <property type="entry name" value="MITOCHONDRIAL RIBOSOMAL PROTEIN S5"/>
    <property type="match status" value="1"/>
</dbReference>
<dbReference type="PANTHER" id="PTHR48277:SF1">
    <property type="entry name" value="MITOCHONDRIAL RIBOSOMAL PROTEIN S5"/>
    <property type="match status" value="1"/>
</dbReference>
<dbReference type="Pfam" id="PF00333">
    <property type="entry name" value="Ribosomal_S5"/>
    <property type="match status" value="1"/>
</dbReference>
<dbReference type="Pfam" id="PF03719">
    <property type="entry name" value="Ribosomal_S5_C"/>
    <property type="match status" value="1"/>
</dbReference>
<dbReference type="SUPFAM" id="SSF54768">
    <property type="entry name" value="dsRNA-binding domain-like"/>
    <property type="match status" value="1"/>
</dbReference>
<dbReference type="SUPFAM" id="SSF54211">
    <property type="entry name" value="Ribosomal protein S5 domain 2-like"/>
    <property type="match status" value="1"/>
</dbReference>
<dbReference type="PROSITE" id="PS00585">
    <property type="entry name" value="RIBOSOMAL_S5"/>
    <property type="match status" value="1"/>
</dbReference>
<dbReference type="PROSITE" id="PS50881">
    <property type="entry name" value="S5_DSRBD"/>
    <property type="match status" value="1"/>
</dbReference>
<proteinExistence type="inferred from homology"/>
<organism>
    <name type="scientific">Geobacillus sp. (strain WCH70)</name>
    <dbReference type="NCBI Taxonomy" id="471223"/>
    <lineage>
        <taxon>Bacteria</taxon>
        <taxon>Bacillati</taxon>
        <taxon>Bacillota</taxon>
        <taxon>Bacilli</taxon>
        <taxon>Bacillales</taxon>
        <taxon>Anoxybacillaceae</taxon>
        <taxon>Geobacillus</taxon>
    </lineage>
</organism>
<gene>
    <name evidence="1" type="primary">rpsE</name>
    <name type="ordered locus">GWCH70_0128</name>
</gene>
<sequence>MRRIDPNKLELEERVVAVNRVAKVVKGGRRLRFSALVVVGDKNGHVGFGTGKAQEVPDAIRKAIEDAKKNLIEVPIVGTTIPHEVIGHFGAGKIILKPASEGTGVIAGGPARAVLELAGISDILSKSIGSNTPINMVRATVDGLKQLKRAEDVARLRGKTVEELLG</sequence>
<feature type="chain" id="PRO_1000214319" description="Small ribosomal subunit protein uS5">
    <location>
        <begin position="1"/>
        <end position="166"/>
    </location>
</feature>
<feature type="domain" description="S5 DRBM" evidence="1">
    <location>
        <begin position="11"/>
        <end position="74"/>
    </location>
</feature>
<comment type="function">
    <text evidence="1">With S4 and S12 plays an important role in translational accuracy.</text>
</comment>
<comment type="function">
    <text evidence="1">Located at the back of the 30S subunit body where it stabilizes the conformation of the head with respect to the body.</text>
</comment>
<comment type="subunit">
    <text evidence="1">Part of the 30S ribosomal subunit. Contacts proteins S4 and S8.</text>
</comment>
<comment type="domain">
    <text>The N-terminal domain interacts with the head of the 30S subunit; the C-terminal domain interacts with the body and contacts protein S4. The interaction surface between S4 and S5 is involved in control of translational fidelity.</text>
</comment>
<comment type="similarity">
    <text evidence="1">Belongs to the universal ribosomal protein uS5 family.</text>
</comment>
<name>RS5_GEOSW</name>
<accession>C5D3T4</accession>
<reference key="1">
    <citation type="submission" date="2009-06" db="EMBL/GenBank/DDBJ databases">
        <title>Complete sequence of chromosome of Geopacillus sp. WCH70.</title>
        <authorList>
            <consortium name="US DOE Joint Genome Institute"/>
            <person name="Lucas S."/>
            <person name="Copeland A."/>
            <person name="Lapidus A."/>
            <person name="Glavina del Rio T."/>
            <person name="Dalin E."/>
            <person name="Tice H."/>
            <person name="Bruce D."/>
            <person name="Goodwin L."/>
            <person name="Pitluck S."/>
            <person name="Chertkov O."/>
            <person name="Brettin T."/>
            <person name="Detter J.C."/>
            <person name="Han C."/>
            <person name="Larimer F."/>
            <person name="Land M."/>
            <person name="Hauser L."/>
            <person name="Kyrpides N."/>
            <person name="Mikhailova N."/>
            <person name="Brumm P."/>
            <person name="Mead D.A."/>
            <person name="Richardson P."/>
        </authorList>
    </citation>
    <scope>NUCLEOTIDE SEQUENCE [LARGE SCALE GENOMIC DNA]</scope>
    <source>
        <strain>WCH70</strain>
    </source>
</reference>